<feature type="initiator methionine" description="Removed" evidence="4">
    <location>
        <position position="1"/>
    </location>
</feature>
<feature type="chain" id="PRO_0000190898" description="Apurinic-apyrimidinic endonuclease 1">
    <location>
        <begin position="2"/>
        <end position="367"/>
    </location>
</feature>
<feature type="region of interest" description="Disordered" evidence="2">
    <location>
        <begin position="312"/>
        <end position="367"/>
    </location>
</feature>
<feature type="compositionally biased region" description="Basic and acidic residues" evidence="2">
    <location>
        <begin position="321"/>
        <end position="332"/>
    </location>
</feature>
<feature type="compositionally biased region" description="Basic residues" evidence="2">
    <location>
        <begin position="333"/>
        <end position="344"/>
    </location>
</feature>
<feature type="binding site" evidence="1">
    <location>
        <position position="83"/>
    </location>
    <ligand>
        <name>Zn(2+)</name>
        <dbReference type="ChEBI" id="CHEBI:29105"/>
        <label>1</label>
    </ligand>
</feature>
<feature type="binding site" evidence="1">
    <location>
        <position position="123"/>
    </location>
    <ligand>
        <name>Zn(2+)</name>
        <dbReference type="ChEBI" id="CHEBI:29105"/>
        <label>1</label>
    </ligand>
</feature>
<feature type="binding site" evidence="1">
    <location>
        <position position="158"/>
    </location>
    <ligand>
        <name>Zn(2+)</name>
        <dbReference type="ChEBI" id="CHEBI:29105"/>
        <label>1</label>
    </ligand>
</feature>
<feature type="binding site" evidence="1">
    <location>
        <position position="158"/>
    </location>
    <ligand>
        <name>Zn(2+)</name>
        <dbReference type="ChEBI" id="CHEBI:29105"/>
        <label>2</label>
    </ligand>
</feature>
<feature type="binding site" evidence="1">
    <location>
        <position position="192"/>
    </location>
    <ligand>
        <name>Zn(2+)</name>
        <dbReference type="ChEBI" id="CHEBI:29105"/>
        <label>2</label>
    </ligand>
</feature>
<feature type="binding site" evidence="1">
    <location>
        <position position="195"/>
    </location>
    <ligand>
        <name>Zn(2+)</name>
        <dbReference type="ChEBI" id="CHEBI:29105"/>
        <label>3</label>
    </ligand>
</feature>
<feature type="binding site" evidence="1">
    <location>
        <position position="229"/>
    </location>
    <ligand>
        <name>Zn(2+)</name>
        <dbReference type="ChEBI" id="CHEBI:29105"/>
        <label>2</label>
    </ligand>
</feature>
<feature type="binding site" evidence="1">
    <location>
        <position position="242"/>
    </location>
    <ligand>
        <name>Zn(2+)</name>
        <dbReference type="ChEBI" id="CHEBI:29105"/>
        <label>3</label>
    </ligand>
</feature>
<feature type="binding site" evidence="1">
    <location>
        <position position="244"/>
    </location>
    <ligand>
        <name>Zn(2+)</name>
        <dbReference type="ChEBI" id="CHEBI:29105"/>
        <label>3</label>
    </ligand>
</feature>
<feature type="binding site" evidence="1">
    <location>
        <position position="274"/>
    </location>
    <ligand>
        <name>Zn(2+)</name>
        <dbReference type="ChEBI" id="CHEBI:29105"/>
        <label>2</label>
    </ligand>
</feature>
<feature type="modified residue" description="Phosphoserine" evidence="6">
    <location>
        <position position="356"/>
    </location>
</feature>
<feature type="sequence conflict" description="In Ref. 1; AAA34429." evidence="5" ref="1">
    <original>A</original>
    <variation>S</variation>
    <location>
        <position position="239"/>
    </location>
</feature>
<reference key="1">
    <citation type="journal article" date="1990" name="Proc. Natl. Acad. Sci. U.S.A.">
        <title>Yeast structural gene (APN1) for the major apurinic endonuclease: homology to Escherichia coli endonuclease IV.</title>
        <authorList>
            <person name="Popoff S.C."/>
            <person name="Spira A.I."/>
            <person name="Johnson A.W."/>
            <person name="Demple B."/>
        </authorList>
    </citation>
    <scope>NUCLEOTIDE SEQUENCE [GENOMIC DNA]</scope>
</reference>
<reference key="2">
    <citation type="journal article" date="1992" name="Yeast">
        <title>Sequence of a 10.7 kb segment of yeast chromosome XI identifies the APN1 and the BAF1 loci and reveals one tRNA gene and several new open reading frames including homologs to RAD2 and kinases.</title>
        <authorList>
            <person name="Jacquier A."/>
            <person name="Legrain P."/>
            <person name="Dujon B."/>
        </authorList>
    </citation>
    <scope>NUCLEOTIDE SEQUENCE [GENOMIC DNA]</scope>
</reference>
<reference key="3">
    <citation type="journal article" date="1994" name="Nature">
        <title>Complete DNA sequence of yeast chromosome XI.</title>
        <authorList>
            <person name="Dujon B."/>
            <person name="Alexandraki D."/>
            <person name="Andre B."/>
            <person name="Ansorge W."/>
            <person name="Baladron V."/>
            <person name="Ballesta J.P.G."/>
            <person name="Banrevi A."/>
            <person name="Bolle P.-A."/>
            <person name="Bolotin-Fukuhara M."/>
            <person name="Bossier P."/>
            <person name="Bou G."/>
            <person name="Boyer J."/>
            <person name="Buitrago M.J."/>
            <person name="Cheret G."/>
            <person name="Colleaux L."/>
            <person name="Daignan-Fornier B."/>
            <person name="del Rey F."/>
            <person name="Dion C."/>
            <person name="Domdey H."/>
            <person name="Duesterhoeft A."/>
            <person name="Duesterhus S."/>
            <person name="Entian K.-D."/>
            <person name="Erfle H."/>
            <person name="Esteban P.F."/>
            <person name="Feldmann H."/>
            <person name="Fernandes L."/>
            <person name="Fobo G.M."/>
            <person name="Fritz C."/>
            <person name="Fukuhara H."/>
            <person name="Gabel C."/>
            <person name="Gaillon L."/>
            <person name="Garcia-Cantalejo J.M."/>
            <person name="Garcia-Ramirez J.J."/>
            <person name="Gent M.E."/>
            <person name="Ghazvini M."/>
            <person name="Goffeau A."/>
            <person name="Gonzalez A."/>
            <person name="Grothues D."/>
            <person name="Guerreiro P."/>
            <person name="Hegemann J.H."/>
            <person name="Hewitt N."/>
            <person name="Hilger F."/>
            <person name="Hollenberg C.P."/>
            <person name="Horaitis O."/>
            <person name="Indge K.J."/>
            <person name="Jacquier A."/>
            <person name="James C.M."/>
            <person name="Jauniaux J.-C."/>
            <person name="Jimenez A."/>
            <person name="Keuchel H."/>
            <person name="Kirchrath L."/>
            <person name="Kleine K."/>
            <person name="Koetter P."/>
            <person name="Legrain P."/>
            <person name="Liebl S."/>
            <person name="Louis E.J."/>
            <person name="Maia e Silva A."/>
            <person name="Marck C."/>
            <person name="Monnier A.-L."/>
            <person name="Moestl D."/>
            <person name="Mueller S."/>
            <person name="Obermaier B."/>
            <person name="Oliver S.G."/>
            <person name="Pallier C."/>
            <person name="Pascolo S."/>
            <person name="Pfeiffer F."/>
            <person name="Philippsen P."/>
            <person name="Planta R.J."/>
            <person name="Pohl F.M."/>
            <person name="Pohl T.M."/>
            <person name="Poehlmann R."/>
            <person name="Portetelle D."/>
            <person name="Purnelle B."/>
            <person name="Puzos V."/>
            <person name="Ramezani Rad M."/>
            <person name="Rasmussen S.W."/>
            <person name="Remacha M.A."/>
            <person name="Revuelta J.L."/>
            <person name="Richard G.-F."/>
            <person name="Rieger M."/>
            <person name="Rodrigues-Pousada C."/>
            <person name="Rose M."/>
            <person name="Rupp T."/>
            <person name="Santos M.A."/>
            <person name="Schwager C."/>
            <person name="Sensen C."/>
            <person name="Skala J."/>
            <person name="Soares H."/>
            <person name="Sor F."/>
            <person name="Stegemann J."/>
            <person name="Tettelin H."/>
            <person name="Thierry A."/>
            <person name="Tzermia M."/>
            <person name="Urrestarazu L.A."/>
            <person name="van Dyck L."/>
            <person name="van Vliet-Reedijk J.C."/>
            <person name="Valens M."/>
            <person name="Vandenbol M."/>
            <person name="Vilela C."/>
            <person name="Vissers S."/>
            <person name="von Wettstein D."/>
            <person name="Voss H."/>
            <person name="Wiemann S."/>
            <person name="Xu G."/>
            <person name="Zimmermann J."/>
            <person name="Haasemann M."/>
            <person name="Becker I."/>
            <person name="Mewes H.-W."/>
        </authorList>
    </citation>
    <scope>NUCLEOTIDE SEQUENCE [LARGE SCALE GENOMIC DNA]</scope>
    <source>
        <strain>ATCC 204508 / S288c</strain>
    </source>
</reference>
<reference key="4">
    <citation type="journal article" date="2014" name="G3 (Bethesda)">
        <title>The reference genome sequence of Saccharomyces cerevisiae: Then and now.</title>
        <authorList>
            <person name="Engel S.R."/>
            <person name="Dietrich F.S."/>
            <person name="Fisk D.G."/>
            <person name="Binkley G."/>
            <person name="Balakrishnan R."/>
            <person name="Costanzo M.C."/>
            <person name="Dwight S.S."/>
            <person name="Hitz B.C."/>
            <person name="Karra K."/>
            <person name="Nash R.S."/>
            <person name="Weng S."/>
            <person name="Wong E.D."/>
            <person name="Lloyd P."/>
            <person name="Skrzypek M.S."/>
            <person name="Miyasato S.R."/>
            <person name="Simison M."/>
            <person name="Cherry J.M."/>
        </authorList>
    </citation>
    <scope>GENOME REANNOTATION</scope>
    <source>
        <strain>ATCC 204508 / S288c</strain>
    </source>
</reference>
<reference key="5">
    <citation type="journal article" date="1988" name="J. Biol. Chem.">
        <title>Yeast DNA diesterase for 3'-fragments of deoxyribose: purification and physical properties of a repair enzyme for oxidative DNA damage.</title>
        <authorList>
            <person name="Johnson A.W."/>
            <person name="Demple B."/>
        </authorList>
    </citation>
    <scope>CHARACTERIZATION</scope>
    <scope>PROTEIN SEQUENCE OF 2-26</scope>
    <scope>CATALYTIC ACTIVITY</scope>
</reference>
<reference key="6">
    <citation type="journal article" date="1991" name="J. Biol. Chem.">
        <title>Metalloenzymes in DNA repair. Escherichia coli endonuclease IV and Saccharomyces cerevisiae Apn1.</title>
        <authorList>
            <person name="Levin J.D."/>
            <person name="Shapiro R."/>
            <person name="Demple B."/>
        </authorList>
    </citation>
    <scope>METAL-BINDING STUDIES</scope>
</reference>
<reference key="7">
    <citation type="journal article" date="2003" name="Nature">
        <title>Global analysis of protein expression in yeast.</title>
        <authorList>
            <person name="Ghaemmaghami S."/>
            <person name="Huh W.-K."/>
            <person name="Bower K."/>
            <person name="Howson R.W."/>
            <person name="Belle A."/>
            <person name="Dephoure N."/>
            <person name="O'Shea E.K."/>
            <person name="Weissman J.S."/>
        </authorList>
    </citation>
    <scope>LEVEL OF PROTEIN EXPRESSION [LARGE SCALE ANALYSIS]</scope>
</reference>
<reference key="8">
    <citation type="journal article" date="2009" name="Science">
        <title>Global analysis of Cdk1 substrate phosphorylation sites provides insights into evolution.</title>
        <authorList>
            <person name="Holt L.J."/>
            <person name="Tuch B.B."/>
            <person name="Villen J."/>
            <person name="Johnson A.D."/>
            <person name="Gygi S.P."/>
            <person name="Morgan D.O."/>
        </authorList>
    </citation>
    <scope>PHOSPHORYLATION [LARGE SCALE ANALYSIS] AT SER-356</scope>
    <scope>IDENTIFICATION BY MASS SPECTROMETRY [LARGE SCALE ANALYSIS]</scope>
</reference>
<proteinExistence type="evidence at protein level"/>
<protein>
    <recommendedName>
        <fullName>Apurinic-apyrimidinic endonuclease 1</fullName>
        <shortName>AP endonuclease 1</shortName>
        <ecNumber evidence="4">3.1.21.-</ecNumber>
    </recommendedName>
</protein>
<accession>P22936</accession>
<accession>D6VXH4</accession>
<organism>
    <name type="scientific">Saccharomyces cerevisiae (strain ATCC 204508 / S288c)</name>
    <name type="common">Baker's yeast</name>
    <dbReference type="NCBI Taxonomy" id="559292"/>
    <lineage>
        <taxon>Eukaryota</taxon>
        <taxon>Fungi</taxon>
        <taxon>Dikarya</taxon>
        <taxon>Ascomycota</taxon>
        <taxon>Saccharomycotina</taxon>
        <taxon>Saccharomycetes</taxon>
        <taxon>Saccharomycetales</taxon>
        <taxon>Saccharomycetaceae</taxon>
        <taxon>Saccharomyces</taxon>
    </lineage>
</organism>
<comment type="function">
    <text>DNA repair enzyme that cleaves apurinic/apyrimidinic (AP) sites and removes 3'-blocking groups present at single strand breaks of damaged DNA. APN1 accounts for &gt; 97% of both apurinic/apyrimidinic (AP) endonuclease and DNA 3'-repair diesterase activities.</text>
</comment>
<comment type="cofactor">
    <cofactor>
        <name>Zn(2+)</name>
        <dbReference type="ChEBI" id="CHEBI:29105"/>
    </cofactor>
    <text>Binds 3 Zn(2+) ions.</text>
</comment>
<comment type="subunit">
    <text>Monomer.</text>
</comment>
<comment type="subcellular location">
    <subcellularLocation>
        <location>Nucleus</location>
    </subcellularLocation>
</comment>
<comment type="miscellaneous">
    <text evidence="3">Present with 7250 molecules/cell in log phase SD medium.</text>
</comment>
<comment type="similarity">
    <text evidence="5">Belongs to the AP endonuclease 2 family.</text>
</comment>
<evidence type="ECO:0000250" key="1"/>
<evidence type="ECO:0000256" key="2">
    <source>
        <dbReference type="SAM" id="MobiDB-lite"/>
    </source>
</evidence>
<evidence type="ECO:0000269" key="3">
    <source>
    </source>
</evidence>
<evidence type="ECO:0000269" key="4">
    <source>
    </source>
</evidence>
<evidence type="ECO:0000305" key="5"/>
<evidence type="ECO:0007744" key="6">
    <source>
    </source>
</evidence>
<keyword id="KW-0903">Direct protein sequencing</keyword>
<keyword id="KW-0227">DNA damage</keyword>
<keyword id="KW-0234">DNA repair</keyword>
<keyword id="KW-0378">Hydrolase</keyword>
<keyword id="KW-0479">Metal-binding</keyword>
<keyword id="KW-0539">Nucleus</keyword>
<keyword id="KW-0597">Phosphoprotein</keyword>
<keyword id="KW-1185">Reference proteome</keyword>
<keyword id="KW-0862">Zinc</keyword>
<sequence>MPSTPSFVRSAVSKYKFGAHMSGAGGISNSVTNAFNTGCNSFAMFLKSPRKWVSPQYTQEEIDKFKKNCATYNYNPLTDVLPHGQYFINLANPDREKAEKSYESFMDDLNRCEQLGIGLYNLHPGSTLKGDHQLQLKQLASYLNKAIKETKFVKIVLENMAGTGNLVGSSLVDLKEVIGMIEDKSRIGVCIDTCHTFAAGYDISTTETFNNFWKEFNDVIGFKYLSAVHLNDSKAPLGANRDLHERLGQGYLGIDVFRMIAHSEYLQGIPIVLETPYENDEGYGNEIKLMEWLESKSESELLEDKEYKEKNDTLQKLGAKSRKEQLDKFEVKQKKRAGGTKRKKATAEPSDNDILSQMTKKRKTKKE</sequence>
<gene>
    <name type="primary">APN1</name>
    <name type="ordered locus">YKL114C</name>
    <name type="ORF">YKL513</name>
</gene>
<name>APN1_YEAST</name>
<dbReference type="EC" id="3.1.21.-" evidence="4"/>
<dbReference type="EMBL" id="M33667">
    <property type="protein sequence ID" value="AAA34429.1"/>
    <property type="molecule type" value="Genomic_DNA"/>
</dbReference>
<dbReference type="EMBL" id="S93804">
    <property type="protein sequence ID" value="AAB22003.1"/>
    <property type="molecule type" value="Genomic_DNA"/>
</dbReference>
<dbReference type="EMBL" id="Z28114">
    <property type="protein sequence ID" value="CAA81954.1"/>
    <property type="molecule type" value="Genomic_DNA"/>
</dbReference>
<dbReference type="EMBL" id="BK006944">
    <property type="protein sequence ID" value="DAA09044.1"/>
    <property type="molecule type" value="Genomic_DNA"/>
</dbReference>
<dbReference type="PIR" id="S29871">
    <property type="entry name" value="S29871"/>
</dbReference>
<dbReference type="RefSeq" id="NP_012808.1">
    <property type="nucleotide sequence ID" value="NM_001179680.1"/>
</dbReference>
<dbReference type="SMR" id="P22936"/>
<dbReference type="BioGRID" id="34020">
    <property type="interactions" value="132"/>
</dbReference>
<dbReference type="DIP" id="DIP-4106N"/>
<dbReference type="FunCoup" id="P22936">
    <property type="interactions" value="74"/>
</dbReference>
<dbReference type="IntAct" id="P22936">
    <property type="interactions" value="14"/>
</dbReference>
<dbReference type="MINT" id="P22936"/>
<dbReference type="STRING" id="4932.YKL114C"/>
<dbReference type="iPTMnet" id="P22936"/>
<dbReference type="PaxDb" id="4932-YKL114C"/>
<dbReference type="PeptideAtlas" id="P22936"/>
<dbReference type="EnsemblFungi" id="YKL114C_mRNA">
    <property type="protein sequence ID" value="YKL114C"/>
    <property type="gene ID" value="YKL114C"/>
</dbReference>
<dbReference type="GeneID" id="853746"/>
<dbReference type="KEGG" id="sce:YKL114C"/>
<dbReference type="AGR" id="SGD:S000001597"/>
<dbReference type="SGD" id="S000001597">
    <property type="gene designation" value="APN1"/>
</dbReference>
<dbReference type="VEuPathDB" id="FungiDB:YKL114C"/>
<dbReference type="eggNOG" id="KOG3997">
    <property type="taxonomic scope" value="Eukaryota"/>
</dbReference>
<dbReference type="GeneTree" id="ENSGT00390000013698"/>
<dbReference type="HOGENOM" id="CLU_025885_1_0_1"/>
<dbReference type="InParanoid" id="P22936"/>
<dbReference type="OMA" id="HPGSHLR"/>
<dbReference type="OrthoDB" id="7663182at2759"/>
<dbReference type="BioCyc" id="YEAST:G3O-31899-MONOMER"/>
<dbReference type="BRENDA" id="4.2.99.18">
    <property type="organism ID" value="984"/>
</dbReference>
<dbReference type="BioGRID-ORCS" id="853746">
    <property type="hits" value="0 hits in 10 CRISPR screens"/>
</dbReference>
<dbReference type="PRO" id="PR:P22936"/>
<dbReference type="Proteomes" id="UP000002311">
    <property type="component" value="Chromosome XI"/>
</dbReference>
<dbReference type="RNAct" id="P22936">
    <property type="molecule type" value="protein"/>
</dbReference>
<dbReference type="GO" id="GO:0005739">
    <property type="term" value="C:mitochondrion"/>
    <property type="evidence" value="ECO:0000314"/>
    <property type="project" value="SGD"/>
</dbReference>
<dbReference type="GO" id="GO:0005634">
    <property type="term" value="C:nucleus"/>
    <property type="evidence" value="ECO:0000314"/>
    <property type="project" value="CACAO"/>
</dbReference>
<dbReference type="GO" id="GO:0008296">
    <property type="term" value="F:3'-5'-DNA exonuclease activity"/>
    <property type="evidence" value="ECO:0000314"/>
    <property type="project" value="CACAO"/>
</dbReference>
<dbReference type="GO" id="GO:0017005">
    <property type="term" value="F:3'-tyrosyl-DNA phosphodiesterase activity"/>
    <property type="evidence" value="ECO:0000314"/>
    <property type="project" value="CACAO"/>
</dbReference>
<dbReference type="GO" id="GO:0003677">
    <property type="term" value="F:DNA binding"/>
    <property type="evidence" value="ECO:0007669"/>
    <property type="project" value="InterPro"/>
</dbReference>
<dbReference type="GO" id="GO:0003906">
    <property type="term" value="F:DNA-(apurinic or apyrimidinic site) endonuclease activity"/>
    <property type="evidence" value="ECO:0000314"/>
    <property type="project" value="CACAO"/>
</dbReference>
<dbReference type="GO" id="GO:0008311">
    <property type="term" value="F:double-stranded DNA 3'-5' DNA exonuclease activity"/>
    <property type="evidence" value="ECO:0000314"/>
    <property type="project" value="SGD"/>
</dbReference>
<dbReference type="GO" id="GO:0008081">
    <property type="term" value="F:phosphoric diester hydrolase activity"/>
    <property type="evidence" value="ECO:0000314"/>
    <property type="project" value="SGD"/>
</dbReference>
<dbReference type="GO" id="GO:0008270">
    <property type="term" value="F:zinc ion binding"/>
    <property type="evidence" value="ECO:0007669"/>
    <property type="project" value="InterPro"/>
</dbReference>
<dbReference type="GO" id="GO:0006284">
    <property type="term" value="P:base-excision repair"/>
    <property type="evidence" value="ECO:0000314"/>
    <property type="project" value="SGD"/>
</dbReference>
<dbReference type="CDD" id="cd00019">
    <property type="entry name" value="AP2Ec"/>
    <property type="match status" value="1"/>
</dbReference>
<dbReference type="FunFam" id="3.20.20.150:FF:000001">
    <property type="entry name" value="Probable endonuclease 4"/>
    <property type="match status" value="1"/>
</dbReference>
<dbReference type="Gene3D" id="3.20.20.150">
    <property type="entry name" value="Divalent-metal-dependent TIM barrel enzymes"/>
    <property type="match status" value="1"/>
</dbReference>
<dbReference type="HAMAP" id="MF_00152">
    <property type="entry name" value="Nfo"/>
    <property type="match status" value="1"/>
</dbReference>
<dbReference type="InterPro" id="IPR001719">
    <property type="entry name" value="AP_endonuc_2"/>
</dbReference>
<dbReference type="InterPro" id="IPR018246">
    <property type="entry name" value="AP_endonuc_F2_Zn_BS"/>
</dbReference>
<dbReference type="InterPro" id="IPR036237">
    <property type="entry name" value="Xyl_isomerase-like_sf"/>
</dbReference>
<dbReference type="InterPro" id="IPR013022">
    <property type="entry name" value="Xyl_isomerase-like_TIM-brl"/>
</dbReference>
<dbReference type="NCBIfam" id="TIGR00587">
    <property type="entry name" value="nfo"/>
    <property type="match status" value="1"/>
</dbReference>
<dbReference type="PANTHER" id="PTHR21445:SF0">
    <property type="entry name" value="APURINIC-APYRIMIDINIC ENDONUCLEASE"/>
    <property type="match status" value="1"/>
</dbReference>
<dbReference type="PANTHER" id="PTHR21445">
    <property type="entry name" value="ENDONUCLEASE IV ENDODEOXYRIBONUCLEASE IV"/>
    <property type="match status" value="1"/>
</dbReference>
<dbReference type="Pfam" id="PF01261">
    <property type="entry name" value="AP_endonuc_2"/>
    <property type="match status" value="1"/>
</dbReference>
<dbReference type="SMART" id="SM00518">
    <property type="entry name" value="AP2Ec"/>
    <property type="match status" value="1"/>
</dbReference>
<dbReference type="SUPFAM" id="SSF51658">
    <property type="entry name" value="Xylose isomerase-like"/>
    <property type="match status" value="1"/>
</dbReference>
<dbReference type="PROSITE" id="PS00729">
    <property type="entry name" value="AP_NUCLEASE_F2_1"/>
    <property type="match status" value="1"/>
</dbReference>
<dbReference type="PROSITE" id="PS00730">
    <property type="entry name" value="AP_NUCLEASE_F2_2"/>
    <property type="match status" value="1"/>
</dbReference>
<dbReference type="PROSITE" id="PS00731">
    <property type="entry name" value="AP_NUCLEASE_F2_3"/>
    <property type="match status" value="1"/>
</dbReference>
<dbReference type="PROSITE" id="PS51432">
    <property type="entry name" value="AP_NUCLEASE_F2_4"/>
    <property type="match status" value="1"/>
</dbReference>